<keyword id="KW-0408">Iron</keyword>
<keyword id="KW-0411">Iron-sulfur</keyword>
<keyword id="KW-0479">Metal-binding</keyword>
<sequence>MSTLVSLPTVAPAPDYQSIDRPLNFSVAAAAKVRELIQEEGNADLALRVYIQGGGCSGFQYGFEFDENRAEDDLAVATDGVTLLVDPLSLQYLMGAEVDYTESLTGAQFVIRNPNAKTTCGCGSSFSV</sequence>
<feature type="chain" id="PRO_0000311578" description="Iron-sulfur cluster insertion protein ErpA">
    <location>
        <begin position="1"/>
        <end position="128"/>
    </location>
</feature>
<feature type="binding site" evidence="1">
    <location>
        <position position="56"/>
    </location>
    <ligand>
        <name>iron-sulfur cluster</name>
        <dbReference type="ChEBI" id="CHEBI:30408"/>
    </ligand>
</feature>
<feature type="binding site" evidence="1">
    <location>
        <position position="120"/>
    </location>
    <ligand>
        <name>iron-sulfur cluster</name>
        <dbReference type="ChEBI" id="CHEBI:30408"/>
    </ligand>
</feature>
<feature type="binding site" evidence="1">
    <location>
        <position position="122"/>
    </location>
    <ligand>
        <name>iron-sulfur cluster</name>
        <dbReference type="ChEBI" id="CHEBI:30408"/>
    </ligand>
</feature>
<reference key="1">
    <citation type="journal article" date="2005" name="J. Bacteriol.">
        <title>Insights into genome plasticity and pathogenicity of the plant pathogenic Bacterium Xanthomonas campestris pv. vesicatoria revealed by the complete genome sequence.</title>
        <authorList>
            <person name="Thieme F."/>
            <person name="Koebnik R."/>
            <person name="Bekel T."/>
            <person name="Berger C."/>
            <person name="Boch J."/>
            <person name="Buettner D."/>
            <person name="Caldana C."/>
            <person name="Gaigalat L."/>
            <person name="Goesmann A."/>
            <person name="Kay S."/>
            <person name="Kirchner O."/>
            <person name="Lanz C."/>
            <person name="Linke B."/>
            <person name="McHardy A.C."/>
            <person name="Meyer F."/>
            <person name="Mittenhuber G."/>
            <person name="Nies D.H."/>
            <person name="Niesbach-Kloesgen U."/>
            <person name="Patschkowski T."/>
            <person name="Rueckert C."/>
            <person name="Rupp O."/>
            <person name="Schneiker S."/>
            <person name="Schuster S.C."/>
            <person name="Vorhoelter F.J."/>
            <person name="Weber E."/>
            <person name="Puehler A."/>
            <person name="Bonas U."/>
            <person name="Bartels D."/>
            <person name="Kaiser O."/>
        </authorList>
    </citation>
    <scope>NUCLEOTIDE SEQUENCE [LARGE SCALE GENOMIC DNA]</scope>
    <source>
        <strain>85-10</strain>
    </source>
</reference>
<protein>
    <recommendedName>
        <fullName evidence="1">Iron-sulfur cluster insertion protein ErpA</fullName>
    </recommendedName>
</protein>
<evidence type="ECO:0000255" key="1">
    <source>
        <dbReference type="HAMAP-Rule" id="MF_01380"/>
    </source>
</evidence>
<comment type="function">
    <text evidence="1">Required for insertion of 4Fe-4S clusters for at least IspG.</text>
</comment>
<comment type="cofactor">
    <cofactor evidence="1">
        <name>iron-sulfur cluster</name>
        <dbReference type="ChEBI" id="CHEBI:30408"/>
    </cofactor>
    <text evidence="1">Binds 1 iron-sulfur cluster per subunit.</text>
</comment>
<comment type="subunit">
    <text evidence="1">Homodimer.</text>
</comment>
<comment type="similarity">
    <text evidence="1">Belongs to the HesB/IscA family.</text>
</comment>
<proteinExistence type="inferred from homology"/>
<name>ERPA_XANE5</name>
<organism>
    <name type="scientific">Xanthomonas euvesicatoria pv. vesicatoria (strain 85-10)</name>
    <name type="common">Xanthomonas campestris pv. vesicatoria</name>
    <dbReference type="NCBI Taxonomy" id="316273"/>
    <lineage>
        <taxon>Bacteria</taxon>
        <taxon>Pseudomonadati</taxon>
        <taxon>Pseudomonadota</taxon>
        <taxon>Gammaproteobacteria</taxon>
        <taxon>Lysobacterales</taxon>
        <taxon>Lysobacteraceae</taxon>
        <taxon>Xanthomonas</taxon>
    </lineage>
</organism>
<gene>
    <name evidence="1" type="primary">erpA</name>
    <name type="ordered locus">XCV0534</name>
</gene>
<dbReference type="EMBL" id="AM039952">
    <property type="protein sequence ID" value="CAJ22165.1"/>
    <property type="molecule type" value="Genomic_DNA"/>
</dbReference>
<dbReference type="RefSeq" id="WP_008574005.1">
    <property type="nucleotide sequence ID" value="NZ_CP017190.1"/>
</dbReference>
<dbReference type="SMR" id="Q3BY98"/>
<dbReference type="STRING" id="456327.BJD11_20200"/>
<dbReference type="GeneID" id="97508888"/>
<dbReference type="KEGG" id="xcv:XCV0534"/>
<dbReference type="eggNOG" id="COG0316">
    <property type="taxonomic scope" value="Bacteria"/>
</dbReference>
<dbReference type="HOGENOM" id="CLU_069054_5_3_6"/>
<dbReference type="Proteomes" id="UP000007069">
    <property type="component" value="Chromosome"/>
</dbReference>
<dbReference type="GO" id="GO:0005829">
    <property type="term" value="C:cytosol"/>
    <property type="evidence" value="ECO:0007669"/>
    <property type="project" value="TreeGrafter"/>
</dbReference>
<dbReference type="GO" id="GO:0051537">
    <property type="term" value="F:2 iron, 2 sulfur cluster binding"/>
    <property type="evidence" value="ECO:0007669"/>
    <property type="project" value="TreeGrafter"/>
</dbReference>
<dbReference type="GO" id="GO:0051539">
    <property type="term" value="F:4 iron, 4 sulfur cluster binding"/>
    <property type="evidence" value="ECO:0007669"/>
    <property type="project" value="TreeGrafter"/>
</dbReference>
<dbReference type="GO" id="GO:0005506">
    <property type="term" value="F:iron ion binding"/>
    <property type="evidence" value="ECO:0007669"/>
    <property type="project" value="UniProtKB-UniRule"/>
</dbReference>
<dbReference type="GO" id="GO:0016226">
    <property type="term" value="P:iron-sulfur cluster assembly"/>
    <property type="evidence" value="ECO:0007669"/>
    <property type="project" value="UniProtKB-UniRule"/>
</dbReference>
<dbReference type="FunFam" id="2.60.300.12:FF:000002">
    <property type="entry name" value="Iron-sulfur cluster insertion protein ErpA"/>
    <property type="match status" value="1"/>
</dbReference>
<dbReference type="Gene3D" id="2.60.300.12">
    <property type="entry name" value="HesB-like domain"/>
    <property type="match status" value="1"/>
</dbReference>
<dbReference type="HAMAP" id="MF_01380">
    <property type="entry name" value="Fe_S_insert_ErpA"/>
    <property type="match status" value="1"/>
</dbReference>
<dbReference type="InterPro" id="IPR000361">
    <property type="entry name" value="FeS_biogenesis"/>
</dbReference>
<dbReference type="InterPro" id="IPR016092">
    <property type="entry name" value="FeS_cluster_insertion"/>
</dbReference>
<dbReference type="InterPro" id="IPR017870">
    <property type="entry name" value="FeS_cluster_insertion_CS"/>
</dbReference>
<dbReference type="InterPro" id="IPR023063">
    <property type="entry name" value="FeS_cluster_insertion_RrpA"/>
</dbReference>
<dbReference type="InterPro" id="IPR035903">
    <property type="entry name" value="HesB-like_dom_sf"/>
</dbReference>
<dbReference type="NCBIfam" id="TIGR00049">
    <property type="entry name" value="iron-sulfur cluster assembly accessory protein"/>
    <property type="match status" value="1"/>
</dbReference>
<dbReference type="NCBIfam" id="NF010147">
    <property type="entry name" value="PRK13623.1"/>
    <property type="match status" value="1"/>
</dbReference>
<dbReference type="PANTHER" id="PTHR43011">
    <property type="entry name" value="IRON-SULFUR CLUSTER ASSEMBLY 2 HOMOLOG, MITOCHONDRIAL"/>
    <property type="match status" value="1"/>
</dbReference>
<dbReference type="PANTHER" id="PTHR43011:SF1">
    <property type="entry name" value="IRON-SULFUR CLUSTER ASSEMBLY 2 HOMOLOG, MITOCHONDRIAL"/>
    <property type="match status" value="1"/>
</dbReference>
<dbReference type="Pfam" id="PF01521">
    <property type="entry name" value="Fe-S_biosyn"/>
    <property type="match status" value="1"/>
</dbReference>
<dbReference type="SUPFAM" id="SSF89360">
    <property type="entry name" value="HesB-like domain"/>
    <property type="match status" value="1"/>
</dbReference>
<dbReference type="PROSITE" id="PS01152">
    <property type="entry name" value="HESB"/>
    <property type="match status" value="1"/>
</dbReference>
<accession>Q3BY98</accession>